<comment type="function">
    <text evidence="1 4">High-affinity permease for arginine (PubMed:37005249). May also transport other basic amino acids (By similarity).</text>
</comment>
<comment type="subcellular location">
    <subcellularLocation>
        <location evidence="4">Cell membrane</location>
        <topology evidence="2">Multi-pass membrane protein</topology>
    </subcellularLocation>
</comment>
<comment type="disruption phenotype">
    <text evidence="4">Resistance to canavanine.</text>
</comment>
<comment type="similarity">
    <text evidence="6">Belongs to the amino acid-polyamine-organocation (APC) superfamily. YAT (TC 2.A.3.10) family.</text>
</comment>
<sequence length="597" mass="66348">MKFRNILKNEKNEKNEASASTSHASEDIEIIPSRYDNEKFYSATEATHKKKTGSTGFDDTISLTHTLSRSRIPTSMEDEDAEEAEVHDTRVKRALKQRHIGMIALGGTIGTGLFVGISTPLSNSGPVGALIAYIFMGTIIYFVTQSLGEMATFIPVTSSITVFSKRFLSPAFGVANGYMYWFNWAITYAVEVSVIGQVIQYWTFKVPLAAWIGIFWVLITLMNFFPVKIYGEFEFWVASIKVIAIVGYLIYALIIVCGGSHQGPIGFRYWRNPGAMGAGIISSDLGEARFLGWVSSLINAAFTYQGTELVGITAGEAANPRKSVPRAINKVVFRIVLFYIMSLFFVGLLVPYNDPRLSASSAVIASSPFVISIQNAGTKVLPDIFNAVVLVTVISAANSNVYVGSRVLYALAQSGNAPKQFAYVTRHGVPYLGVICTALLGLLAFLVVNHNANTAFNWLINISTLAGLCAWLFISLAHIRFMQALKFRGISRDDLPFKAKFMPWGAYYASFFVTVIIFIQGFQAFAPKFDVSEFFTAYISLILLVVLFAGCQLYYRCRFLWKLEDIDIDSDRREIDAIVWEDDEPQNLWEKFWAAVA</sequence>
<protein>
    <recommendedName>
        <fullName evidence="6">Arginine permease CAN1</fullName>
    </recommendedName>
</protein>
<gene>
    <name evidence="5" type="primary">CAN1</name>
    <name evidence="7" type="ordered locus">CAGL0J08162g</name>
</gene>
<dbReference type="EMBL" id="CR380956">
    <property type="protein sequence ID" value="CAG61014.1"/>
    <property type="molecule type" value="Genomic_DNA"/>
</dbReference>
<dbReference type="RefSeq" id="XP_448063.1">
    <property type="nucleotide sequence ID" value="XM_448063.1"/>
</dbReference>
<dbReference type="SMR" id="Q6FNY1"/>
<dbReference type="FunCoup" id="Q6FNY1">
    <property type="interactions" value="140"/>
</dbReference>
<dbReference type="STRING" id="284593.Q6FNY1"/>
<dbReference type="EnsemblFungi" id="CAGL0J08162g-T">
    <property type="protein sequence ID" value="CAGL0J08162g-T-p1"/>
    <property type="gene ID" value="CAGL0J08162g"/>
</dbReference>
<dbReference type="KEGG" id="cgr:2889920"/>
<dbReference type="CGD" id="CAL0132774">
    <property type="gene designation" value="CAN1"/>
</dbReference>
<dbReference type="VEuPathDB" id="FungiDB:CAGL0J08162g"/>
<dbReference type="eggNOG" id="KOG1286">
    <property type="taxonomic scope" value="Eukaryota"/>
</dbReference>
<dbReference type="HOGENOM" id="CLU_007946_12_1_1"/>
<dbReference type="InParanoid" id="Q6FNY1"/>
<dbReference type="OMA" id="LFKALWY"/>
<dbReference type="Proteomes" id="UP000002428">
    <property type="component" value="Chromosome J"/>
</dbReference>
<dbReference type="GO" id="GO:0032126">
    <property type="term" value="C:eisosome"/>
    <property type="evidence" value="ECO:0007669"/>
    <property type="project" value="EnsemblFungi"/>
</dbReference>
<dbReference type="GO" id="GO:0005886">
    <property type="term" value="C:plasma membrane"/>
    <property type="evidence" value="ECO:0000314"/>
    <property type="project" value="UniProtKB"/>
</dbReference>
<dbReference type="GO" id="GO:0061459">
    <property type="term" value="F:L-arginine transmembrane transporter activity"/>
    <property type="evidence" value="ECO:0000314"/>
    <property type="project" value="UniProtKB"/>
</dbReference>
<dbReference type="GO" id="GO:1903826">
    <property type="term" value="P:L-arginine transmembrane transport"/>
    <property type="evidence" value="ECO:0000314"/>
    <property type="project" value="UniProtKB"/>
</dbReference>
<dbReference type="GO" id="GO:0044010">
    <property type="term" value="P:single-species biofilm formation"/>
    <property type="evidence" value="ECO:0000315"/>
    <property type="project" value="CGD"/>
</dbReference>
<dbReference type="FunFam" id="1.20.1740.10:FF:000006">
    <property type="entry name" value="General amino acid permease"/>
    <property type="match status" value="1"/>
</dbReference>
<dbReference type="Gene3D" id="1.20.1740.10">
    <property type="entry name" value="Amino acid/polyamine transporter I"/>
    <property type="match status" value="1"/>
</dbReference>
<dbReference type="InterPro" id="IPR004841">
    <property type="entry name" value="AA-permease/SLC12A_dom"/>
</dbReference>
<dbReference type="InterPro" id="IPR004840">
    <property type="entry name" value="Amino_acid_permease_CS"/>
</dbReference>
<dbReference type="InterPro" id="IPR004762">
    <property type="entry name" value="Amino_acid_permease_fungi"/>
</dbReference>
<dbReference type="InterPro" id="IPR050524">
    <property type="entry name" value="APC_YAT"/>
</dbReference>
<dbReference type="NCBIfam" id="TIGR00913">
    <property type="entry name" value="2A0310"/>
    <property type="match status" value="1"/>
</dbReference>
<dbReference type="PANTHER" id="PTHR43341">
    <property type="entry name" value="AMINO ACID PERMEASE"/>
    <property type="match status" value="1"/>
</dbReference>
<dbReference type="PANTHER" id="PTHR43341:SF19">
    <property type="entry name" value="LYSINE-SPECIFIC PERMEASE"/>
    <property type="match status" value="1"/>
</dbReference>
<dbReference type="Pfam" id="PF00324">
    <property type="entry name" value="AA_permease"/>
    <property type="match status" value="1"/>
</dbReference>
<dbReference type="PIRSF" id="PIRSF006060">
    <property type="entry name" value="AA_transporter"/>
    <property type="match status" value="1"/>
</dbReference>
<dbReference type="PROSITE" id="PS00218">
    <property type="entry name" value="AMINO_ACID_PERMEASE_1"/>
    <property type="match status" value="1"/>
</dbReference>
<name>CAN1_CANGA</name>
<keyword id="KW-0029">Amino-acid transport</keyword>
<keyword id="KW-1003">Cell membrane</keyword>
<keyword id="KW-0472">Membrane</keyword>
<keyword id="KW-1185">Reference proteome</keyword>
<keyword id="KW-0812">Transmembrane</keyword>
<keyword id="KW-1133">Transmembrane helix</keyword>
<keyword id="KW-0813">Transport</keyword>
<accession>Q6FNY1</accession>
<reference evidence="8" key="1">
    <citation type="journal article" date="2004" name="Nature">
        <title>Genome evolution in yeasts.</title>
        <authorList>
            <person name="Dujon B."/>
            <person name="Sherman D."/>
            <person name="Fischer G."/>
            <person name="Durrens P."/>
            <person name="Casaregola S."/>
            <person name="Lafontaine I."/>
            <person name="de Montigny J."/>
            <person name="Marck C."/>
            <person name="Neuveglise C."/>
            <person name="Talla E."/>
            <person name="Goffard N."/>
            <person name="Frangeul L."/>
            <person name="Aigle M."/>
            <person name="Anthouard V."/>
            <person name="Babour A."/>
            <person name="Barbe V."/>
            <person name="Barnay S."/>
            <person name="Blanchin S."/>
            <person name="Beckerich J.-M."/>
            <person name="Beyne E."/>
            <person name="Bleykasten C."/>
            <person name="Boisrame A."/>
            <person name="Boyer J."/>
            <person name="Cattolico L."/>
            <person name="Confanioleri F."/>
            <person name="de Daruvar A."/>
            <person name="Despons L."/>
            <person name="Fabre E."/>
            <person name="Fairhead C."/>
            <person name="Ferry-Dumazet H."/>
            <person name="Groppi A."/>
            <person name="Hantraye F."/>
            <person name="Hennequin C."/>
            <person name="Jauniaux N."/>
            <person name="Joyet P."/>
            <person name="Kachouri R."/>
            <person name="Kerrest A."/>
            <person name="Koszul R."/>
            <person name="Lemaire M."/>
            <person name="Lesur I."/>
            <person name="Ma L."/>
            <person name="Muller H."/>
            <person name="Nicaud J.-M."/>
            <person name="Nikolski M."/>
            <person name="Oztas S."/>
            <person name="Ozier-Kalogeropoulos O."/>
            <person name="Pellenz S."/>
            <person name="Potier S."/>
            <person name="Richard G.-F."/>
            <person name="Straub M.-L."/>
            <person name="Suleau A."/>
            <person name="Swennen D."/>
            <person name="Tekaia F."/>
            <person name="Wesolowski-Louvel M."/>
            <person name="Westhof E."/>
            <person name="Wirth B."/>
            <person name="Zeniou-Meyer M."/>
            <person name="Zivanovic Y."/>
            <person name="Bolotin-Fukuhara M."/>
            <person name="Thierry A."/>
            <person name="Bouchier C."/>
            <person name="Caudron B."/>
            <person name="Scarpelli C."/>
            <person name="Gaillardin C."/>
            <person name="Weissenbach J."/>
            <person name="Wincker P."/>
            <person name="Souciet J.-L."/>
        </authorList>
    </citation>
    <scope>NUCLEOTIDE SEQUENCE [LARGE SCALE GENOMIC DNA]</scope>
    <source>
        <strain>ATCC 2001 / BCRC 20586 / JCM 3761 / NBRC 0622 / NRRL Y-65 / CBS 138</strain>
    </source>
</reference>
<reference evidence="6" key="2">
    <citation type="journal article" date="2023" name="J. Gen. Appl. Microbiol.">
        <title>Identification of an arginine transporter in Candida glabrata.</title>
        <authorList>
            <person name="Nishimura A."/>
            <person name="Tanahashi R."/>
            <person name="Nakagami K."/>
            <person name="Morioka Y."/>
            <person name="Takagi H."/>
        </authorList>
    </citation>
    <scope>FUNCTION</scope>
    <scope>SUBCELLULAR LOCATION</scope>
    <scope>DISRUPTION PHENOTYPE</scope>
    <source>
        <strain evidence="5">KUE100</strain>
    </source>
</reference>
<feature type="chain" id="PRO_0000458462" description="Arginine permease CAN1">
    <location>
        <begin position="1"/>
        <end position="597"/>
    </location>
</feature>
<feature type="transmembrane region" description="Helical" evidence="2">
    <location>
        <begin position="100"/>
        <end position="120"/>
    </location>
</feature>
<feature type="transmembrane region" description="Helical" evidence="2">
    <location>
        <begin position="124"/>
        <end position="144"/>
    </location>
</feature>
<feature type="transmembrane region" description="Helical" evidence="2">
    <location>
        <begin position="179"/>
        <end position="199"/>
    </location>
</feature>
<feature type="transmembrane region" description="Helical" evidence="2">
    <location>
        <begin position="206"/>
        <end position="226"/>
    </location>
</feature>
<feature type="transmembrane region" description="Helical" evidence="2">
    <location>
        <begin position="235"/>
        <end position="255"/>
    </location>
</feature>
<feature type="transmembrane region" description="Helical" evidence="2">
    <location>
        <begin position="331"/>
        <end position="351"/>
    </location>
</feature>
<feature type="transmembrane region" description="Helical" evidence="2">
    <location>
        <begin position="384"/>
        <end position="404"/>
    </location>
</feature>
<feature type="transmembrane region" description="Helical" evidence="2">
    <location>
        <begin position="428"/>
        <end position="448"/>
    </location>
</feature>
<feature type="transmembrane region" description="Helical" evidence="2">
    <location>
        <begin position="459"/>
        <end position="479"/>
    </location>
</feature>
<feature type="transmembrane region" description="Helical" evidence="2">
    <location>
        <begin position="501"/>
        <end position="521"/>
    </location>
</feature>
<feature type="transmembrane region" description="Helical" evidence="2">
    <location>
        <begin position="534"/>
        <end position="554"/>
    </location>
</feature>
<feature type="region of interest" description="Disordered" evidence="3">
    <location>
        <begin position="1"/>
        <end position="29"/>
    </location>
</feature>
<feature type="compositionally biased region" description="Basic and acidic residues" evidence="3">
    <location>
        <begin position="7"/>
        <end position="16"/>
    </location>
</feature>
<proteinExistence type="inferred from homology"/>
<evidence type="ECO:0000250" key="1">
    <source>
        <dbReference type="UniProtKB" id="A0A1D8PPI5"/>
    </source>
</evidence>
<evidence type="ECO:0000255" key="2"/>
<evidence type="ECO:0000256" key="3">
    <source>
        <dbReference type="SAM" id="MobiDB-lite"/>
    </source>
</evidence>
<evidence type="ECO:0000269" key="4">
    <source>
    </source>
</evidence>
<evidence type="ECO:0000303" key="5">
    <source>
    </source>
</evidence>
<evidence type="ECO:0000305" key="6"/>
<evidence type="ECO:0000312" key="7">
    <source>
        <dbReference type="CGD" id="CAL0132774"/>
    </source>
</evidence>
<evidence type="ECO:0000312" key="8">
    <source>
        <dbReference type="Proteomes" id="UP000002428"/>
    </source>
</evidence>
<organism>
    <name type="scientific">Candida glabrata (strain ATCC 2001 / BCRC 20586 / JCM 3761 / NBRC 0622 / NRRL Y-65 / CBS 138)</name>
    <name type="common">Yeast</name>
    <name type="synonym">Nakaseomyces glabratus</name>
    <dbReference type="NCBI Taxonomy" id="284593"/>
    <lineage>
        <taxon>Eukaryota</taxon>
        <taxon>Fungi</taxon>
        <taxon>Dikarya</taxon>
        <taxon>Ascomycota</taxon>
        <taxon>Saccharomycotina</taxon>
        <taxon>Saccharomycetes</taxon>
        <taxon>Saccharomycetales</taxon>
        <taxon>Saccharomycetaceae</taxon>
        <taxon>Nakaseomyces</taxon>
    </lineage>
</organism>